<name>SNG2_RAT</name>
<protein>
    <recommendedName>
        <fullName evidence="11">Synaptogyrin-2</fullName>
    </recommendedName>
    <alternativeName>
        <fullName evidence="10">Cellugyrin</fullName>
    </alternativeName>
</protein>
<keyword id="KW-0007">Acetylation</keyword>
<keyword id="KW-0968">Cytoplasmic vesicle</keyword>
<keyword id="KW-0472">Membrane</keyword>
<keyword id="KW-0597">Phosphoprotein</keyword>
<keyword id="KW-1185">Reference proteome</keyword>
<keyword id="KW-0770">Synapse</keyword>
<keyword id="KW-0812">Transmembrane</keyword>
<keyword id="KW-1133">Transmembrane helix</keyword>
<organism>
    <name type="scientific">Rattus norvegicus</name>
    <name type="common">Rat</name>
    <dbReference type="NCBI Taxonomy" id="10116"/>
    <lineage>
        <taxon>Eukaryota</taxon>
        <taxon>Metazoa</taxon>
        <taxon>Chordata</taxon>
        <taxon>Craniata</taxon>
        <taxon>Vertebrata</taxon>
        <taxon>Euteleostomi</taxon>
        <taxon>Mammalia</taxon>
        <taxon>Eutheria</taxon>
        <taxon>Euarchontoglires</taxon>
        <taxon>Glires</taxon>
        <taxon>Rodentia</taxon>
        <taxon>Myomorpha</taxon>
        <taxon>Muroidea</taxon>
        <taxon>Muridae</taxon>
        <taxon>Murinae</taxon>
        <taxon>Rattus</taxon>
    </lineage>
</organism>
<comment type="function">
    <text evidence="4 6 7 8">May play a role in regulated exocytosis (PubMed:10383386). In neuronal cells, modulates the localization of synaptophysin/SYP into synaptic-like microvesicles and may therefore play a role in the formation and/or the maturation of this vesicles (PubMed:12928441, PubMed:15590695). May also play a role in GLUT4 storage and transport to the plasma membrane (PubMed:26071524).</text>
</comment>
<comment type="subcellular location">
    <subcellularLocation>
        <location evidence="6 8">Cytoplasmic vesicle membrane</location>
        <topology evidence="2">Multi-pass membrane protein</topology>
    </subcellularLocation>
    <subcellularLocation>
        <location evidence="6 9">Cytoplasmic vesicle</location>
        <location evidence="6 9">Secretory vesicle</location>
        <location evidence="6 9">Synaptic vesicle membrane</location>
        <topology evidence="2">Multi-pass membrane protein</topology>
    </subcellularLocation>
    <text evidence="5">Localizes to cytoplasmic vesicles associated with the recycling endosomes.</text>
</comment>
<comment type="tissue specificity">
    <text evidence="9">Ubiquitously expressed with lower expression in brain (at protein level).</text>
</comment>
<comment type="PTM">
    <text evidence="9">May be tyrosine phosphorylated by Src.</text>
</comment>
<comment type="similarity">
    <text evidence="11">Belongs to the synaptogyrin family.</text>
</comment>
<comment type="sequence caution" evidence="11">
    <conflict type="erroneous initiation">
        <sequence resource="EMBL-CDS" id="AAB96666"/>
    </conflict>
    <text>Extended N-terminus.</text>
</comment>
<evidence type="ECO:0000250" key="1">
    <source>
        <dbReference type="UniProtKB" id="O43760"/>
    </source>
</evidence>
<evidence type="ECO:0000255" key="2"/>
<evidence type="ECO:0000255" key="3">
    <source>
        <dbReference type="PROSITE-ProRule" id="PRU00581"/>
    </source>
</evidence>
<evidence type="ECO:0000269" key="4">
    <source>
    </source>
</evidence>
<evidence type="ECO:0000269" key="5">
    <source>
    </source>
</evidence>
<evidence type="ECO:0000269" key="6">
    <source>
    </source>
</evidence>
<evidence type="ECO:0000269" key="7">
    <source>
    </source>
</evidence>
<evidence type="ECO:0000269" key="8">
    <source>
    </source>
</evidence>
<evidence type="ECO:0000269" key="9">
    <source>
    </source>
</evidence>
<evidence type="ECO:0000303" key="10">
    <source>
    </source>
</evidence>
<evidence type="ECO:0000305" key="11"/>
<evidence type="ECO:0000312" key="12">
    <source>
        <dbReference type="RGD" id="621334"/>
    </source>
</evidence>
<gene>
    <name evidence="12" type="primary">Syngr2</name>
</gene>
<dbReference type="EMBL" id="AF039085">
    <property type="protein sequence ID" value="AAB96666.1"/>
    <property type="status" value="ALT_INIT"/>
    <property type="molecule type" value="mRNA"/>
</dbReference>
<dbReference type="RefSeq" id="NP_446005.2">
    <property type="nucleotide sequence ID" value="NM_053553.2"/>
</dbReference>
<dbReference type="SMR" id="O54980"/>
<dbReference type="FunCoup" id="O54980">
    <property type="interactions" value="655"/>
</dbReference>
<dbReference type="IntAct" id="O54980">
    <property type="interactions" value="1"/>
</dbReference>
<dbReference type="STRING" id="10116.ENSRNOP00000064123"/>
<dbReference type="GlyGen" id="O54980">
    <property type="glycosylation" value="1 site"/>
</dbReference>
<dbReference type="PhosphoSitePlus" id="O54980"/>
<dbReference type="PaxDb" id="10116-ENSRNOP00000064123"/>
<dbReference type="GeneID" id="89815"/>
<dbReference type="KEGG" id="rno:89815"/>
<dbReference type="AGR" id="RGD:621334"/>
<dbReference type="CTD" id="9144"/>
<dbReference type="RGD" id="621334">
    <property type="gene designation" value="Syngr2"/>
</dbReference>
<dbReference type="eggNOG" id="KOG4016">
    <property type="taxonomic scope" value="Eukaryota"/>
</dbReference>
<dbReference type="InParanoid" id="O54980"/>
<dbReference type="PhylomeDB" id="O54980"/>
<dbReference type="PRO" id="PR:O54980"/>
<dbReference type="Proteomes" id="UP000002494">
    <property type="component" value="Unplaced"/>
</dbReference>
<dbReference type="GO" id="GO:0016020">
    <property type="term" value="C:membrane"/>
    <property type="evidence" value="ECO:0000314"/>
    <property type="project" value="UniProtKB"/>
</dbReference>
<dbReference type="GO" id="GO:0031594">
    <property type="term" value="C:neuromuscular junction"/>
    <property type="evidence" value="ECO:0000318"/>
    <property type="project" value="GO_Central"/>
</dbReference>
<dbReference type="GO" id="GO:0008021">
    <property type="term" value="C:synaptic vesicle"/>
    <property type="evidence" value="ECO:0000266"/>
    <property type="project" value="RGD"/>
</dbReference>
<dbReference type="GO" id="GO:0030672">
    <property type="term" value="C:synaptic vesicle membrane"/>
    <property type="evidence" value="ECO:0000314"/>
    <property type="project" value="UniProtKB"/>
</dbReference>
<dbReference type="GO" id="GO:0006605">
    <property type="term" value="P:protein targeting"/>
    <property type="evidence" value="ECO:0000314"/>
    <property type="project" value="MGI"/>
</dbReference>
<dbReference type="GO" id="GO:0045055">
    <property type="term" value="P:regulated exocytosis"/>
    <property type="evidence" value="ECO:0000315"/>
    <property type="project" value="UniProtKB"/>
</dbReference>
<dbReference type="GO" id="GO:0048499">
    <property type="term" value="P:synaptic vesicle membrane organization"/>
    <property type="evidence" value="ECO:0000315"/>
    <property type="project" value="UniProtKB"/>
</dbReference>
<dbReference type="InterPro" id="IPR008253">
    <property type="entry name" value="Marvel"/>
</dbReference>
<dbReference type="InterPro" id="IPR016579">
    <property type="entry name" value="Synaptogyrin"/>
</dbReference>
<dbReference type="PANTHER" id="PTHR10838">
    <property type="entry name" value="SYNAPTOGYRIN"/>
    <property type="match status" value="1"/>
</dbReference>
<dbReference type="PANTHER" id="PTHR10838:SF19">
    <property type="entry name" value="SYNAPTOGYRIN-2 LIKE PROTEIN-RELATED"/>
    <property type="match status" value="1"/>
</dbReference>
<dbReference type="Pfam" id="PF01284">
    <property type="entry name" value="MARVEL"/>
    <property type="match status" value="1"/>
</dbReference>
<dbReference type="PIRSF" id="PIRSF011282">
    <property type="entry name" value="Synaptogyrin"/>
    <property type="match status" value="1"/>
</dbReference>
<dbReference type="PROSITE" id="PS51225">
    <property type="entry name" value="MARVEL"/>
    <property type="match status" value="1"/>
</dbReference>
<feature type="chain" id="PRO_0000183995" description="Synaptogyrin-2">
    <location>
        <begin position="1"/>
        <end position="224"/>
    </location>
</feature>
<feature type="transmembrane region" description="Helical" evidence="2">
    <location>
        <begin position="30"/>
        <end position="50"/>
    </location>
</feature>
<feature type="transmembrane region" description="Helical" evidence="2">
    <location>
        <begin position="73"/>
        <end position="93"/>
    </location>
</feature>
<feature type="transmembrane region" description="Helical" evidence="2">
    <location>
        <begin position="105"/>
        <end position="125"/>
    </location>
</feature>
<feature type="transmembrane region" description="Helical" evidence="2">
    <location>
        <begin position="147"/>
        <end position="167"/>
    </location>
</feature>
<feature type="domain" description="MARVEL" evidence="3">
    <location>
        <begin position="20"/>
        <end position="171"/>
    </location>
</feature>
<feature type="modified residue" description="N-acetylmethionine" evidence="1">
    <location>
        <position position="1"/>
    </location>
</feature>
<feature type="modified residue" description="Phosphoserine" evidence="1">
    <location>
        <position position="3"/>
    </location>
</feature>
<feature type="mutagenesis site" description="Increased localization to the plasma membrane." evidence="8">
    <original>FDL</original>
    <variation>AAA</variation>
    <location>
        <begin position="15"/>
        <end position="17"/>
    </location>
</feature>
<reference key="1">
    <citation type="journal article" date="1998" name="J. Biol. Chem.">
        <title>Cellugyrin, a novel ubiquitous form of synaptogyrin that is phosphorylated by pp60(c-src).</title>
        <authorList>
            <person name="Janz R."/>
            <person name="Suedhof T.C."/>
        </authorList>
    </citation>
    <scope>NUCLEOTIDE SEQUENCE [MRNA]</scope>
    <scope>SUBCELLULAR LOCATION</scope>
    <scope>TISSUE SPECIFICITY</scope>
    <scope>PHOSPHORYLATION</scope>
</reference>
<reference key="2">
    <citation type="journal article" date="1999" name="J. Biol. Chem.">
        <title>Synaptogyrins regulate Ca2+-dependent exocytosis in PC12 cells.</title>
        <authorList>
            <person name="Sugita S."/>
            <person name="Janz R."/>
            <person name="Suedhof T.C."/>
        </authorList>
    </citation>
    <scope>FUNCTION</scope>
</reference>
<reference key="3">
    <citation type="journal article" date="2000" name="J. Biol. Chem.">
        <title>Cellugyrin is a marker for a distinct population of intracellular Glut4-containing vesicles.</title>
        <authorList>
            <person name="Kupriyanova T.A."/>
            <person name="Kandror K.V."/>
        </authorList>
    </citation>
    <scope>SUBCELLULAR LOCATION</scope>
</reference>
<reference key="4">
    <citation type="journal article" date="2003" name="J. Biol. Chem.">
        <title>Cellugyrin and synaptogyrin facilitate targeting of synaptophysin to a ubiquitous synaptic vesicle-sized compartment in PC12 cells.</title>
        <authorList>
            <person name="Belfort G.M."/>
            <person name="Kandror K.V."/>
        </authorList>
    </citation>
    <scope>FUNCTION</scope>
    <scope>SUBCELLULAR LOCATION</scope>
</reference>
<reference key="5">
    <citation type="journal article" date="2005" name="J. Biol. Chem.">
        <title>Cellugyrin induces biogenesis of synaptic-like microvesicles in PC12 cells.</title>
        <authorList>
            <person name="Belfort G.M."/>
            <person name="Bakirtzi K."/>
            <person name="Kandror K.V."/>
        </authorList>
    </citation>
    <scope>FUNCTION</scope>
</reference>
<reference key="6">
    <citation type="journal article" date="2015" name="J. Cell Sci.">
        <title>Alternative routes to the cell surface underpin insulin-regulated membrane trafficking of GLUT4.</title>
        <authorList>
            <person name="Kioumourtzoglou D."/>
            <person name="Pryor P.R."/>
            <person name="Gould G.W."/>
            <person name="Bryant N.J."/>
        </authorList>
    </citation>
    <scope>FUNCTION</scope>
    <scope>SUBCELLULAR LOCATION</scope>
    <scope>MUTAGENESIS OF 15-PHE--LEU-17</scope>
</reference>
<proteinExistence type="evidence at protein level"/>
<sequence>MESGAYGAANAGGSFDLRRYVSQPQVVTRLVSMVLALIVFSCIFGEGYINLHSSDQLHCVFNRNEDACRYGSAIGVLAFLASAFFLVVDAFFSQISNATDRKYLVIGDLLFSALWTFLWFVGFCFLTNQWAATKPDDVLVGADSARAAITFSFFSIFSWGVLASLAYQRYKAGVDAFIQNYVDPTPDPTTAYASYPSASVENYQQPPFTQNVETTEGYQPPPVY</sequence>
<accession>O54980</accession>